<reference key="1">
    <citation type="submission" date="2007-03" db="EMBL/GenBank/DDBJ databases">
        <authorList>
            <person name="Heidelberg J."/>
        </authorList>
    </citation>
    <scope>NUCLEOTIDE SEQUENCE [LARGE SCALE GENOMIC DNA]</scope>
    <source>
        <strain>ATCC 39541 / Classical Ogawa 395 / O395</strain>
    </source>
</reference>
<reference key="2">
    <citation type="journal article" date="2008" name="PLoS ONE">
        <title>A recalibrated molecular clock and independent origins for the cholera pandemic clones.</title>
        <authorList>
            <person name="Feng L."/>
            <person name="Reeves P.R."/>
            <person name="Lan R."/>
            <person name="Ren Y."/>
            <person name="Gao C."/>
            <person name="Zhou Z."/>
            <person name="Ren Y."/>
            <person name="Cheng J."/>
            <person name="Wang W."/>
            <person name="Wang J."/>
            <person name="Qian W."/>
            <person name="Li D."/>
            <person name="Wang L."/>
        </authorList>
    </citation>
    <scope>NUCLEOTIDE SEQUENCE [LARGE SCALE GENOMIC DNA]</scope>
    <source>
        <strain>ATCC 39541 / Classical Ogawa 395 / O395</strain>
    </source>
</reference>
<evidence type="ECO:0000255" key="1">
    <source>
        <dbReference type="HAMAP-Rule" id="MF_00210"/>
    </source>
</evidence>
<protein>
    <recommendedName>
        <fullName evidence="1">3-phosphoshikimate 1-carboxyvinyltransferase</fullName>
        <ecNumber evidence="1">2.5.1.19</ecNumber>
    </recommendedName>
    <alternativeName>
        <fullName evidence="1">5-enolpyruvylshikimate-3-phosphate synthase</fullName>
        <shortName evidence="1">EPSP synthase</shortName>
        <shortName evidence="1">EPSPS</shortName>
    </alternativeName>
</protein>
<organism>
    <name type="scientific">Vibrio cholerae serotype O1 (strain ATCC 39541 / Classical Ogawa 395 / O395)</name>
    <dbReference type="NCBI Taxonomy" id="345073"/>
    <lineage>
        <taxon>Bacteria</taxon>
        <taxon>Pseudomonadati</taxon>
        <taxon>Pseudomonadota</taxon>
        <taxon>Gammaproteobacteria</taxon>
        <taxon>Vibrionales</taxon>
        <taxon>Vibrionaceae</taxon>
        <taxon>Vibrio</taxon>
    </lineage>
</organism>
<sequence>MESLTLQPIELISGEVNLPGSKSVSNRALLLAALASGTTRLTNLLDSDDIRHMLNALTKLGVNYRLSADKTTCEVEGLGQAFHTTQPLELFLGNAGTAMRPLAAALCLGQGDYVLTGEPRMKERPIGHLVDALRQASAQIEYLEQENFPPLRIQGTGLQAGTVTIDGSISSQFLTAFLMSAPLAQGKVTIKIVGELVSKPYIDITLHIMEQFGVQVINHDYQEFVIPAGQSYVSPGQFLVEGDASSASYFLAAAAIKGGEVKVTGIGKNSIQGDIQFADALEKMGAQIEWGDDYVIARRGELNAVDLDFNHIPDAAMTIATTALFAKGTTAIRNVYNWRVKETDRLAAMATELRKVGATVEEGEDFIVITPPTKLIHAAIDTYDDHRMAMCFSLVALSDTPVTINDPKCTSKTFPDYFDKFAQLSR</sequence>
<comment type="function">
    <text evidence="1">Catalyzes the transfer of the enolpyruvyl moiety of phosphoenolpyruvate (PEP) to the 5-hydroxyl of shikimate-3-phosphate (S3P) to produce enolpyruvyl shikimate-3-phosphate and inorganic phosphate.</text>
</comment>
<comment type="catalytic activity">
    <reaction evidence="1">
        <text>3-phosphoshikimate + phosphoenolpyruvate = 5-O-(1-carboxyvinyl)-3-phosphoshikimate + phosphate</text>
        <dbReference type="Rhea" id="RHEA:21256"/>
        <dbReference type="ChEBI" id="CHEBI:43474"/>
        <dbReference type="ChEBI" id="CHEBI:57701"/>
        <dbReference type="ChEBI" id="CHEBI:58702"/>
        <dbReference type="ChEBI" id="CHEBI:145989"/>
        <dbReference type="EC" id="2.5.1.19"/>
    </reaction>
    <physiologicalReaction direction="left-to-right" evidence="1">
        <dbReference type="Rhea" id="RHEA:21257"/>
    </physiologicalReaction>
</comment>
<comment type="pathway">
    <text evidence="1">Metabolic intermediate biosynthesis; chorismate biosynthesis; chorismate from D-erythrose 4-phosphate and phosphoenolpyruvate: step 6/7.</text>
</comment>
<comment type="subunit">
    <text evidence="1">Monomer.</text>
</comment>
<comment type="subcellular location">
    <subcellularLocation>
        <location evidence="1">Cytoplasm</location>
    </subcellularLocation>
</comment>
<comment type="similarity">
    <text evidence="1">Belongs to the EPSP synthase family.</text>
</comment>
<gene>
    <name evidence="1" type="primary">aroA</name>
    <name type="ordered locus">VC0395_A1334</name>
    <name type="ordered locus">VC395_1848</name>
</gene>
<accession>A5F7G5</accession>
<accession>C3M1C9</accession>
<keyword id="KW-0028">Amino-acid biosynthesis</keyword>
<keyword id="KW-0057">Aromatic amino acid biosynthesis</keyword>
<keyword id="KW-0963">Cytoplasm</keyword>
<keyword id="KW-0808">Transferase</keyword>
<feature type="chain" id="PRO_1000071741" description="3-phosphoshikimate 1-carboxyvinyltransferase">
    <location>
        <begin position="1"/>
        <end position="426"/>
    </location>
</feature>
<feature type="active site" description="Proton acceptor" evidence="1">
    <location>
        <position position="314"/>
    </location>
</feature>
<feature type="binding site" evidence="1">
    <location>
        <position position="22"/>
    </location>
    <ligand>
        <name>3-phosphoshikimate</name>
        <dbReference type="ChEBI" id="CHEBI:145989"/>
    </ligand>
</feature>
<feature type="binding site" evidence="1">
    <location>
        <position position="22"/>
    </location>
    <ligand>
        <name>phosphoenolpyruvate</name>
        <dbReference type="ChEBI" id="CHEBI:58702"/>
    </ligand>
</feature>
<feature type="binding site" evidence="1">
    <location>
        <position position="23"/>
    </location>
    <ligand>
        <name>3-phosphoshikimate</name>
        <dbReference type="ChEBI" id="CHEBI:145989"/>
    </ligand>
</feature>
<feature type="binding site" evidence="1">
    <location>
        <position position="27"/>
    </location>
    <ligand>
        <name>3-phosphoshikimate</name>
        <dbReference type="ChEBI" id="CHEBI:145989"/>
    </ligand>
</feature>
<feature type="binding site" evidence="1">
    <location>
        <position position="96"/>
    </location>
    <ligand>
        <name>phosphoenolpyruvate</name>
        <dbReference type="ChEBI" id="CHEBI:58702"/>
    </ligand>
</feature>
<feature type="binding site" evidence="1">
    <location>
        <position position="124"/>
    </location>
    <ligand>
        <name>phosphoenolpyruvate</name>
        <dbReference type="ChEBI" id="CHEBI:58702"/>
    </ligand>
</feature>
<feature type="binding site" evidence="1">
    <location>
        <position position="170"/>
    </location>
    <ligand>
        <name>3-phosphoshikimate</name>
        <dbReference type="ChEBI" id="CHEBI:145989"/>
    </ligand>
</feature>
<feature type="binding site" evidence="1">
    <location>
        <position position="171"/>
    </location>
    <ligand>
        <name>3-phosphoshikimate</name>
        <dbReference type="ChEBI" id="CHEBI:145989"/>
    </ligand>
</feature>
<feature type="binding site" evidence="1">
    <location>
        <position position="172"/>
    </location>
    <ligand>
        <name>3-phosphoshikimate</name>
        <dbReference type="ChEBI" id="CHEBI:145989"/>
    </ligand>
</feature>
<feature type="binding site" evidence="1">
    <location>
        <position position="172"/>
    </location>
    <ligand>
        <name>phosphoenolpyruvate</name>
        <dbReference type="ChEBI" id="CHEBI:58702"/>
    </ligand>
</feature>
<feature type="binding site" evidence="1">
    <location>
        <position position="198"/>
    </location>
    <ligand>
        <name>3-phosphoshikimate</name>
        <dbReference type="ChEBI" id="CHEBI:145989"/>
    </ligand>
</feature>
<feature type="binding site" evidence="1">
    <location>
        <position position="314"/>
    </location>
    <ligand>
        <name>3-phosphoshikimate</name>
        <dbReference type="ChEBI" id="CHEBI:145989"/>
    </ligand>
</feature>
<feature type="binding site" evidence="1">
    <location>
        <position position="337"/>
    </location>
    <ligand>
        <name>3-phosphoshikimate</name>
        <dbReference type="ChEBI" id="CHEBI:145989"/>
    </ligand>
</feature>
<feature type="binding site" evidence="1">
    <location>
        <position position="341"/>
    </location>
    <ligand>
        <name>3-phosphoshikimate</name>
        <dbReference type="ChEBI" id="CHEBI:145989"/>
    </ligand>
</feature>
<feature type="binding site" evidence="1">
    <location>
        <position position="345"/>
    </location>
    <ligand>
        <name>phosphoenolpyruvate</name>
        <dbReference type="ChEBI" id="CHEBI:58702"/>
    </ligand>
</feature>
<feature type="binding site" evidence="1">
    <location>
        <position position="387"/>
    </location>
    <ligand>
        <name>phosphoenolpyruvate</name>
        <dbReference type="ChEBI" id="CHEBI:58702"/>
    </ligand>
</feature>
<feature type="binding site" evidence="1">
    <location>
        <position position="412"/>
    </location>
    <ligand>
        <name>phosphoenolpyruvate</name>
        <dbReference type="ChEBI" id="CHEBI:58702"/>
    </ligand>
</feature>
<name>AROA_VIBC3</name>
<proteinExistence type="inferred from homology"/>
<dbReference type="EC" id="2.5.1.19" evidence="1"/>
<dbReference type="EMBL" id="CP000627">
    <property type="protein sequence ID" value="ABQ20278.1"/>
    <property type="molecule type" value="Genomic_DNA"/>
</dbReference>
<dbReference type="EMBL" id="CP001235">
    <property type="protein sequence ID" value="ACP09845.1"/>
    <property type="molecule type" value="Genomic_DNA"/>
</dbReference>
<dbReference type="RefSeq" id="WP_000445268.1">
    <property type="nucleotide sequence ID" value="NZ_JAACZH010000016.1"/>
</dbReference>
<dbReference type="SMR" id="A5F7G5"/>
<dbReference type="KEGG" id="vco:VC0395_A1334"/>
<dbReference type="KEGG" id="vcr:VC395_1848"/>
<dbReference type="PATRIC" id="fig|345073.21.peg.1791"/>
<dbReference type="eggNOG" id="COG0128">
    <property type="taxonomic scope" value="Bacteria"/>
</dbReference>
<dbReference type="HOGENOM" id="CLU_024321_0_0_6"/>
<dbReference type="OrthoDB" id="9809920at2"/>
<dbReference type="UniPathway" id="UPA00053">
    <property type="reaction ID" value="UER00089"/>
</dbReference>
<dbReference type="Proteomes" id="UP000000249">
    <property type="component" value="Chromosome 2"/>
</dbReference>
<dbReference type="GO" id="GO:0005737">
    <property type="term" value="C:cytoplasm"/>
    <property type="evidence" value="ECO:0007669"/>
    <property type="project" value="UniProtKB-SubCell"/>
</dbReference>
<dbReference type="GO" id="GO:0003866">
    <property type="term" value="F:3-phosphoshikimate 1-carboxyvinyltransferase activity"/>
    <property type="evidence" value="ECO:0007669"/>
    <property type="project" value="UniProtKB-UniRule"/>
</dbReference>
<dbReference type="GO" id="GO:0008652">
    <property type="term" value="P:amino acid biosynthetic process"/>
    <property type="evidence" value="ECO:0007669"/>
    <property type="project" value="UniProtKB-KW"/>
</dbReference>
<dbReference type="GO" id="GO:0009073">
    <property type="term" value="P:aromatic amino acid family biosynthetic process"/>
    <property type="evidence" value="ECO:0007669"/>
    <property type="project" value="UniProtKB-KW"/>
</dbReference>
<dbReference type="GO" id="GO:0009423">
    <property type="term" value="P:chorismate biosynthetic process"/>
    <property type="evidence" value="ECO:0007669"/>
    <property type="project" value="UniProtKB-UniRule"/>
</dbReference>
<dbReference type="CDD" id="cd01556">
    <property type="entry name" value="EPSP_synthase"/>
    <property type="match status" value="1"/>
</dbReference>
<dbReference type="FunFam" id="3.65.10.10:FF:000003">
    <property type="entry name" value="3-phosphoshikimate 1-carboxyvinyltransferase"/>
    <property type="match status" value="1"/>
</dbReference>
<dbReference type="FunFam" id="3.65.10.10:FF:000004">
    <property type="entry name" value="3-phosphoshikimate 1-carboxyvinyltransferase"/>
    <property type="match status" value="1"/>
</dbReference>
<dbReference type="Gene3D" id="3.65.10.10">
    <property type="entry name" value="Enolpyruvate transferase domain"/>
    <property type="match status" value="2"/>
</dbReference>
<dbReference type="HAMAP" id="MF_00210">
    <property type="entry name" value="EPSP_synth"/>
    <property type="match status" value="1"/>
</dbReference>
<dbReference type="InterPro" id="IPR001986">
    <property type="entry name" value="Enolpyruvate_Tfrase_dom"/>
</dbReference>
<dbReference type="InterPro" id="IPR036968">
    <property type="entry name" value="Enolpyruvate_Tfrase_sf"/>
</dbReference>
<dbReference type="InterPro" id="IPR006264">
    <property type="entry name" value="EPSP_synthase"/>
</dbReference>
<dbReference type="InterPro" id="IPR023193">
    <property type="entry name" value="EPSP_synthase_CS"/>
</dbReference>
<dbReference type="InterPro" id="IPR013792">
    <property type="entry name" value="RNA3'P_cycl/enolpyr_Trfase_a/b"/>
</dbReference>
<dbReference type="NCBIfam" id="TIGR01356">
    <property type="entry name" value="aroA"/>
    <property type="match status" value="1"/>
</dbReference>
<dbReference type="PANTHER" id="PTHR21090">
    <property type="entry name" value="AROM/DEHYDROQUINATE SYNTHASE"/>
    <property type="match status" value="1"/>
</dbReference>
<dbReference type="PANTHER" id="PTHR21090:SF5">
    <property type="entry name" value="PENTAFUNCTIONAL AROM POLYPEPTIDE"/>
    <property type="match status" value="1"/>
</dbReference>
<dbReference type="Pfam" id="PF00275">
    <property type="entry name" value="EPSP_synthase"/>
    <property type="match status" value="1"/>
</dbReference>
<dbReference type="PIRSF" id="PIRSF000505">
    <property type="entry name" value="EPSPS"/>
    <property type="match status" value="1"/>
</dbReference>
<dbReference type="SUPFAM" id="SSF55205">
    <property type="entry name" value="EPT/RTPC-like"/>
    <property type="match status" value="1"/>
</dbReference>
<dbReference type="PROSITE" id="PS00104">
    <property type="entry name" value="EPSP_SYNTHASE_1"/>
    <property type="match status" value="1"/>
</dbReference>
<dbReference type="PROSITE" id="PS00885">
    <property type="entry name" value="EPSP_SYNTHASE_2"/>
    <property type="match status" value="1"/>
</dbReference>